<dbReference type="EMBL" id="AF007813">
    <property type="protein sequence ID" value="AAC35417.1"/>
    <property type="molecule type" value="Genomic_DNA"/>
</dbReference>
<dbReference type="EMBL" id="AE016823">
    <property type="protein sequence ID" value="AAS69144.1"/>
    <property type="molecule type" value="Genomic_DNA"/>
</dbReference>
<dbReference type="RefSeq" id="WP_000004170.1">
    <property type="nucleotide sequence ID" value="NC_005823.1"/>
</dbReference>
<dbReference type="SMR" id="P61440"/>
<dbReference type="GeneID" id="61143878"/>
<dbReference type="KEGG" id="lic:LIC_10523"/>
<dbReference type="HOGENOM" id="CLU_017633_0_7_12"/>
<dbReference type="Proteomes" id="UP000007037">
    <property type="component" value="Chromosome I"/>
</dbReference>
<dbReference type="GO" id="GO:0005737">
    <property type="term" value="C:cytoplasm"/>
    <property type="evidence" value="ECO:0007669"/>
    <property type="project" value="UniProtKB-SubCell"/>
</dbReference>
<dbReference type="GO" id="GO:0005524">
    <property type="term" value="F:ATP binding"/>
    <property type="evidence" value="ECO:0007669"/>
    <property type="project" value="InterPro"/>
</dbReference>
<dbReference type="GO" id="GO:0031072">
    <property type="term" value="F:heat shock protein binding"/>
    <property type="evidence" value="ECO:0007669"/>
    <property type="project" value="InterPro"/>
</dbReference>
<dbReference type="GO" id="GO:0051082">
    <property type="term" value="F:unfolded protein binding"/>
    <property type="evidence" value="ECO:0007669"/>
    <property type="project" value="UniProtKB-UniRule"/>
</dbReference>
<dbReference type="GO" id="GO:0008270">
    <property type="term" value="F:zinc ion binding"/>
    <property type="evidence" value="ECO:0007669"/>
    <property type="project" value="UniProtKB-UniRule"/>
</dbReference>
<dbReference type="GO" id="GO:0051085">
    <property type="term" value="P:chaperone cofactor-dependent protein refolding"/>
    <property type="evidence" value="ECO:0007669"/>
    <property type="project" value="TreeGrafter"/>
</dbReference>
<dbReference type="GO" id="GO:0006260">
    <property type="term" value="P:DNA replication"/>
    <property type="evidence" value="ECO:0007669"/>
    <property type="project" value="UniProtKB-KW"/>
</dbReference>
<dbReference type="GO" id="GO:0042026">
    <property type="term" value="P:protein refolding"/>
    <property type="evidence" value="ECO:0007669"/>
    <property type="project" value="TreeGrafter"/>
</dbReference>
<dbReference type="GO" id="GO:0009408">
    <property type="term" value="P:response to heat"/>
    <property type="evidence" value="ECO:0007669"/>
    <property type="project" value="InterPro"/>
</dbReference>
<dbReference type="CDD" id="cd06257">
    <property type="entry name" value="DnaJ"/>
    <property type="match status" value="1"/>
</dbReference>
<dbReference type="CDD" id="cd10747">
    <property type="entry name" value="DnaJ_C"/>
    <property type="match status" value="1"/>
</dbReference>
<dbReference type="CDD" id="cd10719">
    <property type="entry name" value="DnaJ_zf"/>
    <property type="match status" value="1"/>
</dbReference>
<dbReference type="FunFam" id="1.10.287.110:FF:000034">
    <property type="entry name" value="Chaperone protein DnaJ"/>
    <property type="match status" value="1"/>
</dbReference>
<dbReference type="FunFam" id="2.60.260.20:FF:000005">
    <property type="entry name" value="Chaperone protein dnaJ 1, mitochondrial"/>
    <property type="match status" value="1"/>
</dbReference>
<dbReference type="FunFam" id="2.10.230.10:FF:000002">
    <property type="entry name" value="Molecular chaperone DnaJ"/>
    <property type="match status" value="1"/>
</dbReference>
<dbReference type="Gene3D" id="1.10.287.110">
    <property type="entry name" value="DnaJ domain"/>
    <property type="match status" value="1"/>
</dbReference>
<dbReference type="Gene3D" id="2.10.230.10">
    <property type="entry name" value="Heat shock protein DnaJ, cysteine-rich domain"/>
    <property type="match status" value="1"/>
</dbReference>
<dbReference type="Gene3D" id="2.60.260.20">
    <property type="entry name" value="Urease metallochaperone UreE, N-terminal domain"/>
    <property type="match status" value="2"/>
</dbReference>
<dbReference type="HAMAP" id="MF_01152">
    <property type="entry name" value="DnaJ"/>
    <property type="match status" value="1"/>
</dbReference>
<dbReference type="InterPro" id="IPR012724">
    <property type="entry name" value="DnaJ"/>
</dbReference>
<dbReference type="InterPro" id="IPR002939">
    <property type="entry name" value="DnaJ_C"/>
</dbReference>
<dbReference type="InterPro" id="IPR001623">
    <property type="entry name" value="DnaJ_domain"/>
</dbReference>
<dbReference type="InterPro" id="IPR018253">
    <property type="entry name" value="DnaJ_domain_CS"/>
</dbReference>
<dbReference type="InterPro" id="IPR008971">
    <property type="entry name" value="HSP40/DnaJ_pept-bd"/>
</dbReference>
<dbReference type="InterPro" id="IPR001305">
    <property type="entry name" value="HSP_DnaJ_Cys-rich_dom"/>
</dbReference>
<dbReference type="InterPro" id="IPR036410">
    <property type="entry name" value="HSP_DnaJ_Cys-rich_dom_sf"/>
</dbReference>
<dbReference type="InterPro" id="IPR036869">
    <property type="entry name" value="J_dom_sf"/>
</dbReference>
<dbReference type="NCBIfam" id="TIGR02349">
    <property type="entry name" value="DnaJ_bact"/>
    <property type="match status" value="1"/>
</dbReference>
<dbReference type="NCBIfam" id="NF008035">
    <property type="entry name" value="PRK10767.1"/>
    <property type="match status" value="1"/>
</dbReference>
<dbReference type="NCBIfam" id="NF010879">
    <property type="entry name" value="PRK14286.1"/>
    <property type="match status" value="1"/>
</dbReference>
<dbReference type="PANTHER" id="PTHR43096:SF48">
    <property type="entry name" value="CHAPERONE PROTEIN DNAJ"/>
    <property type="match status" value="1"/>
</dbReference>
<dbReference type="PANTHER" id="PTHR43096">
    <property type="entry name" value="DNAJ HOMOLOG 1, MITOCHONDRIAL-RELATED"/>
    <property type="match status" value="1"/>
</dbReference>
<dbReference type="Pfam" id="PF00226">
    <property type="entry name" value="DnaJ"/>
    <property type="match status" value="1"/>
</dbReference>
<dbReference type="Pfam" id="PF01556">
    <property type="entry name" value="DnaJ_C"/>
    <property type="match status" value="1"/>
</dbReference>
<dbReference type="Pfam" id="PF00684">
    <property type="entry name" value="DnaJ_CXXCXGXG"/>
    <property type="match status" value="1"/>
</dbReference>
<dbReference type="PRINTS" id="PR00625">
    <property type="entry name" value="JDOMAIN"/>
</dbReference>
<dbReference type="SMART" id="SM00271">
    <property type="entry name" value="DnaJ"/>
    <property type="match status" value="1"/>
</dbReference>
<dbReference type="SUPFAM" id="SSF46565">
    <property type="entry name" value="Chaperone J-domain"/>
    <property type="match status" value="1"/>
</dbReference>
<dbReference type="SUPFAM" id="SSF57938">
    <property type="entry name" value="DnaJ/Hsp40 cysteine-rich domain"/>
    <property type="match status" value="1"/>
</dbReference>
<dbReference type="SUPFAM" id="SSF49493">
    <property type="entry name" value="HSP40/DnaJ peptide-binding domain"/>
    <property type="match status" value="2"/>
</dbReference>
<dbReference type="PROSITE" id="PS00636">
    <property type="entry name" value="DNAJ_1"/>
    <property type="match status" value="1"/>
</dbReference>
<dbReference type="PROSITE" id="PS50076">
    <property type="entry name" value="DNAJ_2"/>
    <property type="match status" value="1"/>
</dbReference>
<dbReference type="PROSITE" id="PS51188">
    <property type="entry name" value="ZF_CR"/>
    <property type="match status" value="1"/>
</dbReference>
<gene>
    <name evidence="1" type="primary">dnaJ</name>
    <name type="ordered locus">LIC_10523</name>
</gene>
<proteinExistence type="inferred from homology"/>
<organism>
    <name type="scientific">Leptospira interrogans serogroup Icterohaemorrhagiae serovar copenhageni (strain Fiocruz L1-130)</name>
    <dbReference type="NCBI Taxonomy" id="267671"/>
    <lineage>
        <taxon>Bacteria</taxon>
        <taxon>Pseudomonadati</taxon>
        <taxon>Spirochaetota</taxon>
        <taxon>Spirochaetia</taxon>
        <taxon>Leptospirales</taxon>
        <taxon>Leptospiraceae</taxon>
        <taxon>Leptospira</taxon>
    </lineage>
</organism>
<sequence length="372" mass="40258">MSERSYYDILGVSKSANDEEIKSAYRKLAIKYHPDKNKGNKESEEKFKEATEAYEILRDPKKRQAYDQFGKAGVSGGAGGFGQGAYTDFSDIFGDFGDIFGDFFGGGRSSGFGGGRRSGPQRGSDLRYNLEVSLEDAALGREYKIEIPRLESCVDCNGSGASKGSSPATCPDCGGSGQIRRTQGFFSVATTCPTCRGKGTIISNPCRSCGGQGLQEKRRTINIKIPPGVETGSRLKVSGEGEAGPNGGPHGDLYVVTHIKKHELFERQGNDLILVRKISLAQAILGAEIEVPTIDGKKAKMKIPEGTESGQVFRLKGHGMPYLGAYGKGDQHVIVKIEIPKKITRRQRELIEEFARESGENIPGSKGKIFTK</sequence>
<evidence type="ECO:0000255" key="1">
    <source>
        <dbReference type="HAMAP-Rule" id="MF_01152"/>
    </source>
</evidence>
<evidence type="ECO:0000305" key="2"/>
<feature type="chain" id="PRO_0000070811" description="Chaperone protein DnaJ">
    <location>
        <begin position="1"/>
        <end position="372"/>
    </location>
</feature>
<feature type="domain" description="J" evidence="1">
    <location>
        <begin position="5"/>
        <end position="70"/>
    </location>
</feature>
<feature type="repeat" description="CXXCXGXG motif">
    <location>
        <begin position="153"/>
        <end position="160"/>
    </location>
</feature>
<feature type="repeat" description="CXXCXGXG motif">
    <location>
        <begin position="170"/>
        <end position="177"/>
    </location>
</feature>
<feature type="repeat" description="CXXCXGXG motif">
    <location>
        <begin position="192"/>
        <end position="199"/>
    </location>
</feature>
<feature type="repeat" description="CXXCXGXG motif">
    <location>
        <begin position="206"/>
        <end position="213"/>
    </location>
</feature>
<feature type="zinc finger region" description="CR-type" evidence="1">
    <location>
        <begin position="140"/>
        <end position="218"/>
    </location>
</feature>
<feature type="binding site" evidence="1">
    <location>
        <position position="153"/>
    </location>
    <ligand>
        <name>Zn(2+)</name>
        <dbReference type="ChEBI" id="CHEBI:29105"/>
        <label>1</label>
    </ligand>
</feature>
<feature type="binding site" evidence="1">
    <location>
        <position position="156"/>
    </location>
    <ligand>
        <name>Zn(2+)</name>
        <dbReference type="ChEBI" id="CHEBI:29105"/>
        <label>1</label>
    </ligand>
</feature>
<feature type="binding site" evidence="1">
    <location>
        <position position="170"/>
    </location>
    <ligand>
        <name>Zn(2+)</name>
        <dbReference type="ChEBI" id="CHEBI:29105"/>
        <label>2</label>
    </ligand>
</feature>
<feature type="binding site" evidence="1">
    <location>
        <position position="173"/>
    </location>
    <ligand>
        <name>Zn(2+)</name>
        <dbReference type="ChEBI" id="CHEBI:29105"/>
        <label>2</label>
    </ligand>
</feature>
<feature type="binding site" evidence="1">
    <location>
        <position position="192"/>
    </location>
    <ligand>
        <name>Zn(2+)</name>
        <dbReference type="ChEBI" id="CHEBI:29105"/>
        <label>2</label>
    </ligand>
</feature>
<feature type="binding site" evidence="1">
    <location>
        <position position="195"/>
    </location>
    <ligand>
        <name>Zn(2+)</name>
        <dbReference type="ChEBI" id="CHEBI:29105"/>
        <label>2</label>
    </ligand>
</feature>
<feature type="binding site" evidence="1">
    <location>
        <position position="206"/>
    </location>
    <ligand>
        <name>Zn(2+)</name>
        <dbReference type="ChEBI" id="CHEBI:29105"/>
        <label>1</label>
    </ligand>
</feature>
<feature type="binding site" evidence="1">
    <location>
        <position position="209"/>
    </location>
    <ligand>
        <name>Zn(2+)</name>
        <dbReference type="ChEBI" id="CHEBI:29105"/>
        <label>1</label>
    </ligand>
</feature>
<feature type="sequence conflict" description="In Ref. 1." evidence="2" ref="1">
    <location>
        <begin position="96"/>
        <end position="98"/>
    </location>
</feature>
<protein>
    <recommendedName>
        <fullName evidence="1">Chaperone protein DnaJ</fullName>
    </recommendedName>
</protein>
<comment type="function">
    <text evidence="1">Participates actively in the response to hyperosmotic and heat shock by preventing the aggregation of stress-denatured proteins and by disaggregating proteins, also in an autonomous, DnaK-independent fashion. Unfolded proteins bind initially to DnaJ; upon interaction with the DnaJ-bound protein, DnaK hydrolyzes its bound ATP, resulting in the formation of a stable complex. GrpE releases ADP from DnaK; ATP binding to DnaK triggers the release of the substrate protein, thus completing the reaction cycle. Several rounds of ATP-dependent interactions between DnaJ, DnaK and GrpE are required for fully efficient folding. Also involved, together with DnaK and GrpE, in the DNA replication of plasmids through activation of initiation proteins.</text>
</comment>
<comment type="cofactor">
    <cofactor evidence="1">
        <name>Zn(2+)</name>
        <dbReference type="ChEBI" id="CHEBI:29105"/>
    </cofactor>
    <text evidence="1">Binds 2 Zn(2+) ions per monomer.</text>
</comment>
<comment type="subunit">
    <text evidence="1">Homodimer.</text>
</comment>
<comment type="subcellular location">
    <subcellularLocation>
        <location evidence="1">Cytoplasm</location>
    </subcellularLocation>
</comment>
<comment type="domain">
    <text evidence="1">The J domain is necessary and sufficient to stimulate DnaK ATPase activity. Zinc center 1 plays an important role in the autonomous, DnaK-independent chaperone activity of DnaJ. Zinc center 2 is essential for interaction with DnaK and for DnaJ activity.</text>
</comment>
<comment type="similarity">
    <text evidence="1">Belongs to the DnaJ family.</text>
</comment>
<keyword id="KW-0143">Chaperone</keyword>
<keyword id="KW-0963">Cytoplasm</keyword>
<keyword id="KW-0235">DNA replication</keyword>
<keyword id="KW-0479">Metal-binding</keyword>
<keyword id="KW-0677">Repeat</keyword>
<keyword id="KW-0346">Stress response</keyword>
<keyword id="KW-0862">Zinc</keyword>
<keyword id="KW-0863">Zinc-finger</keyword>
<accession>P61440</accession>
<accession>P71443</accession>
<name>DNAJ_LEPIC</name>
<reference key="1">
    <citation type="journal article" date="1998" name="Gene">
        <title>Molecular analysis of the dnaK locus of Leptospira interrogans serovar Copenhageni.</title>
        <authorList>
            <person name="Ballard S.A."/>
            <person name="Go M."/>
            <person name="Segers R.P.A.M."/>
            <person name="Adler B."/>
        </authorList>
    </citation>
    <scope>NUCLEOTIDE SEQUENCE [GENOMIC DNA]</scope>
    <source>
        <strain>Wijnberg</strain>
    </source>
</reference>
<reference key="2">
    <citation type="journal article" date="2004" name="J. Bacteriol.">
        <title>Comparative genomics of two Leptospira interrogans serovars reveals novel insights into physiology and pathogenesis.</title>
        <authorList>
            <person name="Nascimento A.L.T.O."/>
            <person name="Ko A.I."/>
            <person name="Martins E.A.L."/>
            <person name="Monteiro-Vitorello C.B."/>
            <person name="Ho P.L."/>
            <person name="Haake D.A."/>
            <person name="Verjovski-Almeida S."/>
            <person name="Hartskeerl R.A."/>
            <person name="Marques M.V."/>
            <person name="Oliveira M.C."/>
            <person name="Menck C.F.M."/>
            <person name="Leite L.C.C."/>
            <person name="Carrer H."/>
            <person name="Coutinho L.L."/>
            <person name="Degrave W.M."/>
            <person name="Dellagostin O.A."/>
            <person name="El-Dorry H."/>
            <person name="Ferro E.S."/>
            <person name="Ferro M.I.T."/>
            <person name="Furlan L.R."/>
            <person name="Gamberini M."/>
            <person name="Giglioti E.A."/>
            <person name="Goes-Neto A."/>
            <person name="Goldman G.H."/>
            <person name="Goldman M.H.S."/>
            <person name="Harakava R."/>
            <person name="Jeronimo S.M.B."/>
            <person name="Junqueira-de-Azevedo I.L.M."/>
            <person name="Kimura E.T."/>
            <person name="Kuramae E.E."/>
            <person name="Lemos E.G.M."/>
            <person name="Lemos M.V.F."/>
            <person name="Marino C.L."/>
            <person name="Nunes L.R."/>
            <person name="de Oliveira R.C."/>
            <person name="Pereira G.G."/>
            <person name="Reis M.S."/>
            <person name="Schriefer A."/>
            <person name="Siqueira W.J."/>
            <person name="Sommer P."/>
            <person name="Tsai S.M."/>
            <person name="Simpson A.J.G."/>
            <person name="Ferro J.A."/>
            <person name="Camargo L.E.A."/>
            <person name="Kitajima J.P."/>
            <person name="Setubal J.C."/>
            <person name="Van Sluys M.A."/>
        </authorList>
    </citation>
    <scope>NUCLEOTIDE SEQUENCE [LARGE SCALE GENOMIC DNA]</scope>
    <source>
        <strain>Fiocruz L1-130</strain>
    </source>
</reference>